<comment type="function">
    <text evidence="1">Catalyzes the desulfonation of aliphatic sulfonates.</text>
</comment>
<comment type="catalytic activity">
    <reaction evidence="1">
        <text>an alkanesulfonate + FMNH2 + O2 = an aldehyde + FMN + sulfite + H2O + 2 H(+)</text>
        <dbReference type="Rhea" id="RHEA:23064"/>
        <dbReference type="ChEBI" id="CHEBI:15377"/>
        <dbReference type="ChEBI" id="CHEBI:15378"/>
        <dbReference type="ChEBI" id="CHEBI:15379"/>
        <dbReference type="ChEBI" id="CHEBI:17359"/>
        <dbReference type="ChEBI" id="CHEBI:17478"/>
        <dbReference type="ChEBI" id="CHEBI:57618"/>
        <dbReference type="ChEBI" id="CHEBI:58210"/>
        <dbReference type="ChEBI" id="CHEBI:134249"/>
        <dbReference type="EC" id="1.14.14.5"/>
    </reaction>
</comment>
<comment type="similarity">
    <text evidence="1">Belongs to the SsuD family.</text>
</comment>
<reference key="1">
    <citation type="submission" date="2000-03" db="EMBL/GenBank/DDBJ databases">
        <title>Sulfur-controlled aryl desulfonation phenotypes in Pseudomonas spp. and other soil isolates, and conservation of the sulfonate monooxygenase gene (ssuD).</title>
        <authorList>
            <person name="Kertesz M.A."/>
            <person name="Sialm M."/>
        </authorList>
    </citation>
    <scope>NUCLEOTIDE SEQUENCE [GENOMIC DNA]</scope>
    <source>
        <strain>Blue1</strain>
        <strain>PSBZ</strain>
        <strain>Tar2A</strain>
    </source>
</reference>
<name>SSUD_PSESP</name>
<organism>
    <name type="scientific">Pseudomonas sp</name>
    <dbReference type="NCBI Taxonomy" id="306"/>
    <lineage>
        <taxon>Bacteria</taxon>
        <taxon>Pseudomonadati</taxon>
        <taxon>Pseudomonadota</taxon>
        <taxon>Gammaproteobacteria</taxon>
        <taxon>Pseudomonadales</taxon>
        <taxon>Pseudomonadaceae</taxon>
        <taxon>Pseudomonas</taxon>
    </lineage>
</organism>
<evidence type="ECO:0000255" key="1">
    <source>
        <dbReference type="HAMAP-Rule" id="MF_01229"/>
    </source>
</evidence>
<sequence>MSLNIFWFLPTHGDGKYLGTSDGARAVDHGYLQQIAQAADRLGFGGVLIPTGRSCEDSWLVAASLIPVTERLKFLVALRPGIISPTVAARQAATLDRLSNGRALFNLVTGGDPDELAGDGLHLNHQERYEASVEFTRIWRKVLEGENVDYDGKHIQVKGAKLLYPPVQQPRPPLYFGGSSEAAQDLAAEQVELYLTWGEPPAAVAEKIAQVREKAAAQGREVRFGIRLHVIVRETNEEAWAAADRLISHLDDDTIARAQASLARFDSVGQQRMAALHGGNRDNLEVSPNLWAGVGLVRGGAGTALVGDGPTVAARVKEYADLGIDTFIFSGYPHLEESYRVAELLFLHIDVQRPEQPKTGGYVSPFGEMVANDILPKSVSQS</sequence>
<keyword id="KW-0285">Flavoprotein</keyword>
<keyword id="KW-0288">FMN</keyword>
<keyword id="KW-0503">Monooxygenase</keyword>
<keyword id="KW-0560">Oxidoreductase</keyword>
<gene>
    <name evidence="1" type="primary">ssuD</name>
</gene>
<protein>
    <recommendedName>
        <fullName evidence="1">Alkanesulfonate monooxygenase</fullName>
        <ecNumber evidence="1">1.14.14.5</ecNumber>
    </recommendedName>
    <alternativeName>
        <fullName evidence="1">FMNH2-dependent aliphatic sulfonate monooxygenase</fullName>
    </alternativeName>
</protein>
<accession>Q9KHS2</accession>
<accession>Q9KHR6</accession>
<accession>Q9KHR9</accession>
<proteinExistence type="inferred from homology"/>
<feature type="chain" id="PRO_0000216715" description="Alkanesulfonate monooxygenase">
    <location>
        <begin position="1"/>
        <end position="382"/>
    </location>
</feature>
<feature type="sequence variant" description="In strain: PSBZ.">
    <original>Y</original>
    <variation>H</variation>
    <location>
        <position position="31"/>
    </location>
</feature>
<feature type="sequence variant" description="In strain: Blue1.">
    <original>ER</original>
    <variation>QH</variation>
    <location>
        <begin position="70"/>
        <end position="71"/>
    </location>
</feature>
<feature type="sequence variant" description="In strain: PSBZ.">
    <original>FN</original>
    <variation>IP</variation>
    <location>
        <begin position="105"/>
        <end position="106"/>
    </location>
</feature>
<feature type="sequence variant" description="In strain: Blue1.">
    <original>V</original>
    <variation>I</variation>
    <location>
        <position position="167"/>
    </location>
</feature>
<feature type="sequence variant" description="In strain: Blue1.">
    <original>D</original>
    <variation>E</variation>
    <location>
        <position position="253"/>
    </location>
</feature>
<feature type="sequence variant" description="In strain: PSBZ and Blue1.">
    <original>L</original>
    <variation>P</variation>
    <location>
        <position position="347"/>
    </location>
</feature>
<feature type="sequence variant" description="In strain: Blue1.">
    <original>I</original>
    <variation>L</variation>
    <location>
        <position position="349"/>
    </location>
</feature>
<dbReference type="EC" id="1.14.14.5" evidence="1"/>
<dbReference type="EMBL" id="AF250866">
    <property type="protein sequence ID" value="AAF81701.1"/>
    <property type="molecule type" value="Genomic_DNA"/>
</dbReference>
<dbReference type="EMBL" id="AF250867">
    <property type="protein sequence ID" value="AAF81704.1"/>
    <property type="molecule type" value="Genomic_DNA"/>
</dbReference>
<dbReference type="EMBL" id="AF250868">
    <property type="protein sequence ID" value="AAF81707.1"/>
    <property type="molecule type" value="Genomic_DNA"/>
</dbReference>
<dbReference type="SMR" id="Q9KHS2"/>
<dbReference type="GO" id="GO:0008726">
    <property type="term" value="F:alkanesulfonate monooxygenase activity"/>
    <property type="evidence" value="ECO:0007669"/>
    <property type="project" value="UniProtKB-UniRule"/>
</dbReference>
<dbReference type="GO" id="GO:0046306">
    <property type="term" value="P:alkanesulfonate catabolic process"/>
    <property type="evidence" value="ECO:0007669"/>
    <property type="project" value="TreeGrafter"/>
</dbReference>
<dbReference type="CDD" id="cd01094">
    <property type="entry name" value="Alkanesulfonate_monoxygenase"/>
    <property type="match status" value="1"/>
</dbReference>
<dbReference type="FunFam" id="3.20.20.30:FF:000001">
    <property type="entry name" value="Alkanesulfonate monooxygenase"/>
    <property type="match status" value="1"/>
</dbReference>
<dbReference type="Gene3D" id="3.20.20.30">
    <property type="entry name" value="Luciferase-like domain"/>
    <property type="match status" value="1"/>
</dbReference>
<dbReference type="HAMAP" id="MF_01229">
    <property type="entry name" value="Alkanesulf_monooxygen"/>
    <property type="match status" value="1"/>
</dbReference>
<dbReference type="InterPro" id="IPR019911">
    <property type="entry name" value="Alkanesulphonate_mOase_FMN-dep"/>
</dbReference>
<dbReference type="InterPro" id="IPR011251">
    <property type="entry name" value="Luciferase-like_dom"/>
</dbReference>
<dbReference type="InterPro" id="IPR036661">
    <property type="entry name" value="Luciferase-like_sf"/>
</dbReference>
<dbReference type="InterPro" id="IPR050172">
    <property type="entry name" value="SsuD_RutA_monooxygenase"/>
</dbReference>
<dbReference type="NCBIfam" id="TIGR03565">
    <property type="entry name" value="alk_sulf_monoox"/>
    <property type="match status" value="1"/>
</dbReference>
<dbReference type="NCBIfam" id="NF001939">
    <property type="entry name" value="PRK00719.1"/>
    <property type="match status" value="1"/>
</dbReference>
<dbReference type="PANTHER" id="PTHR42847">
    <property type="entry name" value="ALKANESULFONATE MONOOXYGENASE"/>
    <property type="match status" value="1"/>
</dbReference>
<dbReference type="PANTHER" id="PTHR42847:SF4">
    <property type="entry name" value="ALKANESULFONATE MONOOXYGENASE-RELATED"/>
    <property type="match status" value="1"/>
</dbReference>
<dbReference type="Pfam" id="PF00296">
    <property type="entry name" value="Bac_luciferase"/>
    <property type="match status" value="1"/>
</dbReference>
<dbReference type="SUPFAM" id="SSF51679">
    <property type="entry name" value="Bacterial luciferase-like"/>
    <property type="match status" value="1"/>
</dbReference>